<organism>
    <name type="scientific">Streptococcus gordonii (strain Challis / ATCC 35105 / BCRC 15272 / CH1 / DL1 / V288)</name>
    <dbReference type="NCBI Taxonomy" id="467705"/>
    <lineage>
        <taxon>Bacteria</taxon>
        <taxon>Bacillati</taxon>
        <taxon>Bacillota</taxon>
        <taxon>Bacilli</taxon>
        <taxon>Lactobacillales</taxon>
        <taxon>Streptococcaceae</taxon>
        <taxon>Streptococcus</taxon>
    </lineage>
</organism>
<dbReference type="EMBL" id="CP000725">
    <property type="protein sequence ID" value="ABV09471.1"/>
    <property type="molecule type" value="Genomic_DNA"/>
</dbReference>
<dbReference type="RefSeq" id="WP_012130964.1">
    <property type="nucleotide sequence ID" value="NC_009785.1"/>
</dbReference>
<dbReference type="SMR" id="A8AZL0"/>
<dbReference type="STRING" id="467705.SGO_1970"/>
<dbReference type="KEGG" id="sgo:SGO_1970"/>
<dbReference type="eggNOG" id="COG0097">
    <property type="taxonomic scope" value="Bacteria"/>
</dbReference>
<dbReference type="HOGENOM" id="CLU_065464_1_2_9"/>
<dbReference type="Proteomes" id="UP000001131">
    <property type="component" value="Chromosome"/>
</dbReference>
<dbReference type="GO" id="GO:0022625">
    <property type="term" value="C:cytosolic large ribosomal subunit"/>
    <property type="evidence" value="ECO:0007669"/>
    <property type="project" value="TreeGrafter"/>
</dbReference>
<dbReference type="GO" id="GO:0019843">
    <property type="term" value="F:rRNA binding"/>
    <property type="evidence" value="ECO:0007669"/>
    <property type="project" value="UniProtKB-UniRule"/>
</dbReference>
<dbReference type="GO" id="GO:0003735">
    <property type="term" value="F:structural constituent of ribosome"/>
    <property type="evidence" value="ECO:0007669"/>
    <property type="project" value="InterPro"/>
</dbReference>
<dbReference type="GO" id="GO:0002181">
    <property type="term" value="P:cytoplasmic translation"/>
    <property type="evidence" value="ECO:0007669"/>
    <property type="project" value="TreeGrafter"/>
</dbReference>
<dbReference type="FunFam" id="3.90.930.12:FF:000001">
    <property type="entry name" value="50S ribosomal protein L6"/>
    <property type="match status" value="1"/>
</dbReference>
<dbReference type="FunFam" id="3.90.930.12:FF:000002">
    <property type="entry name" value="50S ribosomal protein L6"/>
    <property type="match status" value="1"/>
</dbReference>
<dbReference type="Gene3D" id="3.90.930.12">
    <property type="entry name" value="Ribosomal protein L6, alpha-beta domain"/>
    <property type="match status" value="2"/>
</dbReference>
<dbReference type="HAMAP" id="MF_01365_B">
    <property type="entry name" value="Ribosomal_uL6_B"/>
    <property type="match status" value="1"/>
</dbReference>
<dbReference type="InterPro" id="IPR000702">
    <property type="entry name" value="Ribosomal_uL6-like"/>
</dbReference>
<dbReference type="InterPro" id="IPR036789">
    <property type="entry name" value="Ribosomal_uL6-like_a/b-dom_sf"/>
</dbReference>
<dbReference type="InterPro" id="IPR020040">
    <property type="entry name" value="Ribosomal_uL6_a/b-dom"/>
</dbReference>
<dbReference type="InterPro" id="IPR019906">
    <property type="entry name" value="Ribosomal_uL6_bac-type"/>
</dbReference>
<dbReference type="InterPro" id="IPR002358">
    <property type="entry name" value="Ribosomal_uL6_CS"/>
</dbReference>
<dbReference type="NCBIfam" id="TIGR03654">
    <property type="entry name" value="L6_bact"/>
    <property type="match status" value="1"/>
</dbReference>
<dbReference type="PANTHER" id="PTHR11655">
    <property type="entry name" value="60S/50S RIBOSOMAL PROTEIN L6/L9"/>
    <property type="match status" value="1"/>
</dbReference>
<dbReference type="PANTHER" id="PTHR11655:SF14">
    <property type="entry name" value="LARGE RIBOSOMAL SUBUNIT PROTEIN UL6M"/>
    <property type="match status" value="1"/>
</dbReference>
<dbReference type="Pfam" id="PF00347">
    <property type="entry name" value="Ribosomal_L6"/>
    <property type="match status" value="2"/>
</dbReference>
<dbReference type="PIRSF" id="PIRSF002162">
    <property type="entry name" value="Ribosomal_L6"/>
    <property type="match status" value="1"/>
</dbReference>
<dbReference type="PRINTS" id="PR00059">
    <property type="entry name" value="RIBOSOMALL6"/>
</dbReference>
<dbReference type="SUPFAM" id="SSF56053">
    <property type="entry name" value="Ribosomal protein L6"/>
    <property type="match status" value="2"/>
</dbReference>
<dbReference type="PROSITE" id="PS00525">
    <property type="entry name" value="RIBOSOMAL_L6_1"/>
    <property type="match status" value="1"/>
</dbReference>
<gene>
    <name evidence="1" type="primary">rplF</name>
    <name type="ordered locus">SGO_1970</name>
</gene>
<reference key="1">
    <citation type="journal article" date="2007" name="J. Bacteriol.">
        <title>Genome-wide transcriptional changes in Streptococcus gordonii in response to competence signaling peptide.</title>
        <authorList>
            <person name="Vickerman M.M."/>
            <person name="Iobst S."/>
            <person name="Jesionowski A.M."/>
            <person name="Gill S.R."/>
        </authorList>
    </citation>
    <scope>NUCLEOTIDE SEQUENCE [LARGE SCALE GENOMIC DNA]</scope>
    <source>
        <strain>Challis / ATCC 35105 / BCRC 15272 / CH1 / DL1 / V288</strain>
    </source>
</reference>
<name>RL6_STRGC</name>
<accession>A8AZL0</accession>
<comment type="function">
    <text evidence="1">This protein binds to the 23S rRNA, and is important in its secondary structure. It is located near the subunit interface in the base of the L7/L12 stalk, and near the tRNA binding site of the peptidyltransferase center.</text>
</comment>
<comment type="subunit">
    <text evidence="1">Part of the 50S ribosomal subunit.</text>
</comment>
<comment type="similarity">
    <text evidence="1">Belongs to the universal ribosomal protein uL6 family.</text>
</comment>
<feature type="chain" id="PRO_1000087071" description="Large ribosomal subunit protein uL6">
    <location>
        <begin position="1"/>
        <end position="178"/>
    </location>
</feature>
<protein>
    <recommendedName>
        <fullName evidence="1">Large ribosomal subunit protein uL6</fullName>
    </recommendedName>
    <alternativeName>
        <fullName evidence="2">50S ribosomal protein L6</fullName>
    </alternativeName>
</protein>
<keyword id="KW-1185">Reference proteome</keyword>
<keyword id="KW-0687">Ribonucleoprotein</keyword>
<keyword id="KW-0689">Ribosomal protein</keyword>
<keyword id="KW-0694">RNA-binding</keyword>
<keyword id="KW-0699">rRNA-binding</keyword>
<proteinExistence type="inferred from homology"/>
<evidence type="ECO:0000255" key="1">
    <source>
        <dbReference type="HAMAP-Rule" id="MF_01365"/>
    </source>
</evidence>
<evidence type="ECO:0000305" key="2"/>
<sequence>MSRIGNKVIVLPAGVEITNNDNVVTVKGPKGELTREFSKDIEIRVEGTEVTLHRPNDSKEMKTIHGTTRALLNNMVIGVSEGFKKELEMRGVGYRAQLQGKKLVLAVGKSHPDEVEAPEGITFELPNPTTIVISGISKEAVGQTAAYVRSLRAPEPYKGKGIRYVGEFVRRKEGKTGK</sequence>